<sequence length="192" mass="21056">MGLEAVVNEIREKGRKEVETIRAETRTDVEEILVDAQTRAAGIKASAQEEADRAVTHIINQEASAANLVVKRQVLNAQKTLLDQVYSASLAAVGDLPAEFQEKALTALLKRAVKEIKKGVVHANERDSPVVEEILSQLKMFSGYTMGAPVDIPGGIIVESNDGELQIDYSYRTFLDEIWESGLKDASDILFT</sequence>
<proteinExistence type="inferred from homology"/>
<keyword id="KW-0066">ATP synthesis</keyword>
<keyword id="KW-1003">Cell membrane</keyword>
<keyword id="KW-0375">Hydrogen ion transport</keyword>
<keyword id="KW-0406">Ion transport</keyword>
<keyword id="KW-0472">Membrane</keyword>
<keyword id="KW-0813">Transport</keyword>
<dbReference type="EMBL" id="CP000562">
    <property type="protein sequence ID" value="ABN56218.1"/>
    <property type="molecule type" value="Genomic_DNA"/>
</dbReference>
<dbReference type="RefSeq" id="WP_011843139.1">
    <property type="nucleotide sequence ID" value="NC_009051.1"/>
</dbReference>
<dbReference type="SMR" id="A3CS68"/>
<dbReference type="STRING" id="368407.Memar_0284"/>
<dbReference type="GeneID" id="4847015"/>
<dbReference type="KEGG" id="mem:Memar_0284"/>
<dbReference type="eggNOG" id="arCOG00869">
    <property type="taxonomic scope" value="Archaea"/>
</dbReference>
<dbReference type="HOGENOM" id="CLU_120786_0_0_2"/>
<dbReference type="OrthoDB" id="4691at2157"/>
<dbReference type="Proteomes" id="UP000002146">
    <property type="component" value="Chromosome"/>
</dbReference>
<dbReference type="GO" id="GO:0005886">
    <property type="term" value="C:plasma membrane"/>
    <property type="evidence" value="ECO:0007669"/>
    <property type="project" value="UniProtKB-SubCell"/>
</dbReference>
<dbReference type="GO" id="GO:0033178">
    <property type="term" value="C:proton-transporting two-sector ATPase complex, catalytic domain"/>
    <property type="evidence" value="ECO:0007669"/>
    <property type="project" value="InterPro"/>
</dbReference>
<dbReference type="GO" id="GO:0005524">
    <property type="term" value="F:ATP binding"/>
    <property type="evidence" value="ECO:0007669"/>
    <property type="project" value="UniProtKB-UniRule"/>
</dbReference>
<dbReference type="GO" id="GO:0046933">
    <property type="term" value="F:proton-transporting ATP synthase activity, rotational mechanism"/>
    <property type="evidence" value="ECO:0007669"/>
    <property type="project" value="UniProtKB-UniRule"/>
</dbReference>
<dbReference type="GO" id="GO:0046961">
    <property type="term" value="F:proton-transporting ATPase activity, rotational mechanism"/>
    <property type="evidence" value="ECO:0007669"/>
    <property type="project" value="InterPro"/>
</dbReference>
<dbReference type="GO" id="GO:0042777">
    <property type="term" value="P:proton motive force-driven plasma membrane ATP synthesis"/>
    <property type="evidence" value="ECO:0007669"/>
    <property type="project" value="UniProtKB-UniRule"/>
</dbReference>
<dbReference type="Gene3D" id="3.30.2320.30">
    <property type="entry name" value="ATP synthase, E subunit, C-terminal"/>
    <property type="match status" value="1"/>
</dbReference>
<dbReference type="Gene3D" id="1.20.5.620">
    <property type="entry name" value="F1F0 ATP synthase subunit B, membrane domain"/>
    <property type="match status" value="1"/>
</dbReference>
<dbReference type="HAMAP" id="MF_00311">
    <property type="entry name" value="ATP_synth_E_arch"/>
    <property type="match status" value="1"/>
</dbReference>
<dbReference type="InterPro" id="IPR038495">
    <property type="entry name" value="ATPase_E_C"/>
</dbReference>
<dbReference type="InterPro" id="IPR002842">
    <property type="entry name" value="ATPase_V1_Esu"/>
</dbReference>
<dbReference type="Pfam" id="PF01991">
    <property type="entry name" value="vATP-synt_E"/>
    <property type="match status" value="1"/>
</dbReference>
<dbReference type="SUPFAM" id="SSF160527">
    <property type="entry name" value="V-type ATPase subunit E-like"/>
    <property type="match status" value="1"/>
</dbReference>
<accession>A3CS68</accession>
<comment type="function">
    <text evidence="1">Component of the A-type ATP synthase that produces ATP from ADP in the presence of a proton gradient across the membrane.</text>
</comment>
<comment type="subunit">
    <text evidence="1">Has multiple subunits with at least A(3), B(3), C, D, E, F, H, I and proteolipid K(x).</text>
</comment>
<comment type="subcellular location">
    <subcellularLocation>
        <location evidence="1">Cell membrane</location>
        <topology evidence="1">Peripheral membrane protein</topology>
    </subcellularLocation>
</comment>
<comment type="similarity">
    <text evidence="1">Belongs to the V-ATPase E subunit family.</text>
</comment>
<evidence type="ECO:0000255" key="1">
    <source>
        <dbReference type="HAMAP-Rule" id="MF_00311"/>
    </source>
</evidence>
<gene>
    <name evidence="1" type="primary">atpE</name>
    <name type="ordered locus">Memar_0284</name>
</gene>
<reference key="1">
    <citation type="journal article" date="2009" name="Stand. Genomic Sci.">
        <title>Complete genome sequence of Methanoculleus marisnigri Romesser et al. 1981 type strain JR1.</title>
        <authorList>
            <person name="Anderson I.J."/>
            <person name="Sieprawska-Lupa M."/>
            <person name="Lapidus A."/>
            <person name="Nolan M."/>
            <person name="Copeland A."/>
            <person name="Glavina Del Rio T."/>
            <person name="Tice H."/>
            <person name="Dalin E."/>
            <person name="Barry K."/>
            <person name="Saunders E."/>
            <person name="Han C."/>
            <person name="Brettin T."/>
            <person name="Detter J.C."/>
            <person name="Bruce D."/>
            <person name="Mikhailova N."/>
            <person name="Pitluck S."/>
            <person name="Hauser L."/>
            <person name="Land M."/>
            <person name="Lucas S."/>
            <person name="Richardson P."/>
            <person name="Whitman W.B."/>
            <person name="Kyrpides N.C."/>
        </authorList>
    </citation>
    <scope>NUCLEOTIDE SEQUENCE [LARGE SCALE GENOMIC DNA]</scope>
    <source>
        <strain>ATCC 35101 / DSM 1498 / JR1</strain>
    </source>
</reference>
<name>AATE_METMJ</name>
<feature type="chain" id="PRO_1000059415" description="A-type ATP synthase subunit E">
    <location>
        <begin position="1"/>
        <end position="192"/>
    </location>
</feature>
<organism>
    <name type="scientific">Methanoculleus marisnigri (strain ATCC 35101 / DSM 1498 / JR1)</name>
    <dbReference type="NCBI Taxonomy" id="368407"/>
    <lineage>
        <taxon>Archaea</taxon>
        <taxon>Methanobacteriati</taxon>
        <taxon>Methanobacteriota</taxon>
        <taxon>Stenosarchaea group</taxon>
        <taxon>Methanomicrobia</taxon>
        <taxon>Methanomicrobiales</taxon>
        <taxon>Methanomicrobiaceae</taxon>
        <taxon>Methanoculleus</taxon>
    </lineage>
</organism>
<protein>
    <recommendedName>
        <fullName evidence="1">A-type ATP synthase subunit E</fullName>
    </recommendedName>
</protein>